<name>PETD_TRICV</name>
<proteinExistence type="inferred from homology"/>
<dbReference type="EMBL" id="Z67753">
    <property type="protein sequence ID" value="CAA91681.1"/>
    <property type="molecule type" value="Genomic_DNA"/>
</dbReference>
<dbReference type="PIR" id="S78308">
    <property type="entry name" value="S78308"/>
</dbReference>
<dbReference type="RefSeq" id="NP_043649.1">
    <property type="nucleotide sequence ID" value="NC_001713.1"/>
</dbReference>
<dbReference type="SMR" id="P49489"/>
<dbReference type="GeneID" id="801776"/>
<dbReference type="GO" id="GO:0009535">
    <property type="term" value="C:chloroplast thylakoid membrane"/>
    <property type="evidence" value="ECO:0007669"/>
    <property type="project" value="UniProtKB-SubCell"/>
</dbReference>
<dbReference type="GO" id="GO:0005739">
    <property type="term" value="C:mitochondrion"/>
    <property type="evidence" value="ECO:0007669"/>
    <property type="project" value="GOC"/>
</dbReference>
<dbReference type="GO" id="GO:0045158">
    <property type="term" value="F:electron transporter, transferring electrons within cytochrome b6/f complex of photosystem II activity"/>
    <property type="evidence" value="ECO:0007669"/>
    <property type="project" value="UniProtKB-UniRule"/>
</dbReference>
<dbReference type="GO" id="GO:0045156">
    <property type="term" value="F:electron transporter, transferring electrons within the cyclic electron transport pathway of photosynthesis activity"/>
    <property type="evidence" value="ECO:0007669"/>
    <property type="project" value="InterPro"/>
</dbReference>
<dbReference type="GO" id="GO:0008121">
    <property type="term" value="F:ubiquinol-cytochrome-c reductase activity"/>
    <property type="evidence" value="ECO:0007669"/>
    <property type="project" value="TreeGrafter"/>
</dbReference>
<dbReference type="GO" id="GO:0006122">
    <property type="term" value="P:mitochondrial electron transport, ubiquinol to cytochrome c"/>
    <property type="evidence" value="ECO:0007669"/>
    <property type="project" value="TreeGrafter"/>
</dbReference>
<dbReference type="GO" id="GO:0009767">
    <property type="term" value="P:photosynthetic electron transport chain"/>
    <property type="evidence" value="ECO:0007669"/>
    <property type="project" value="InterPro"/>
</dbReference>
<dbReference type="CDD" id="cd00290">
    <property type="entry name" value="cytochrome_b_C"/>
    <property type="match status" value="1"/>
</dbReference>
<dbReference type="FunFam" id="1.10.287.980:FF:000001">
    <property type="entry name" value="Cytochrome b6-f complex subunit 4"/>
    <property type="match status" value="1"/>
</dbReference>
<dbReference type="FunFam" id="1.20.5.510:FF:000002">
    <property type="entry name" value="Cytochrome b6-f complex subunit 4"/>
    <property type="match status" value="1"/>
</dbReference>
<dbReference type="Gene3D" id="1.10.287.980">
    <property type="entry name" value="plastocyanin oxidoreductase"/>
    <property type="match status" value="1"/>
</dbReference>
<dbReference type="Gene3D" id="1.20.5.510">
    <property type="entry name" value="Single helix bin"/>
    <property type="match status" value="1"/>
</dbReference>
<dbReference type="HAMAP" id="MF_01344">
    <property type="entry name" value="Cytb6_f_subIV"/>
    <property type="match status" value="1"/>
</dbReference>
<dbReference type="InterPro" id="IPR005798">
    <property type="entry name" value="Cyt_b/b6_C"/>
</dbReference>
<dbReference type="InterPro" id="IPR036150">
    <property type="entry name" value="Cyt_b/b6_C_sf"/>
</dbReference>
<dbReference type="InterPro" id="IPR005870">
    <property type="entry name" value="Cyt_b6/f_cplx_suIV"/>
</dbReference>
<dbReference type="InterPro" id="IPR048260">
    <property type="entry name" value="Cytochrome_b_C_euk/bac"/>
</dbReference>
<dbReference type="NCBIfam" id="TIGR01156">
    <property type="entry name" value="cytb6_f_IV"/>
    <property type="match status" value="1"/>
</dbReference>
<dbReference type="PANTHER" id="PTHR19271">
    <property type="entry name" value="CYTOCHROME B"/>
    <property type="match status" value="1"/>
</dbReference>
<dbReference type="PANTHER" id="PTHR19271:SF41">
    <property type="entry name" value="CYTOCHROME B_B6 C-TERMINAL REGION PROFILE DOMAIN-CONTAINING PROTEIN"/>
    <property type="match status" value="1"/>
</dbReference>
<dbReference type="Pfam" id="PF00032">
    <property type="entry name" value="Cytochrom_B_C"/>
    <property type="match status" value="1"/>
</dbReference>
<dbReference type="PIRSF" id="PIRSF000033">
    <property type="entry name" value="B6f_17K"/>
    <property type="match status" value="1"/>
</dbReference>
<dbReference type="SUPFAM" id="SSF81648">
    <property type="entry name" value="a domain/subunit of cytochrome bc1 complex (Ubiquinol-cytochrome c reductase)"/>
    <property type="match status" value="1"/>
</dbReference>
<dbReference type="PROSITE" id="PS51003">
    <property type="entry name" value="CYTB_CTER"/>
    <property type="match status" value="1"/>
</dbReference>
<gene>
    <name evidence="2" type="primary">petD</name>
</gene>
<protein>
    <recommendedName>
        <fullName evidence="2">Cytochrome b6-f complex subunit 4</fullName>
    </recommendedName>
    <alternativeName>
        <fullName evidence="2">17 kDa polypeptide</fullName>
    </alternativeName>
</protein>
<organism>
    <name type="scientific">Trieres chinensis</name>
    <name type="common">Marine centric diatom</name>
    <name type="synonym">Odontella sinensis</name>
    <dbReference type="NCBI Taxonomy" id="1514140"/>
    <lineage>
        <taxon>Eukaryota</taxon>
        <taxon>Sar</taxon>
        <taxon>Stramenopiles</taxon>
        <taxon>Ochrophyta</taxon>
        <taxon>Bacillariophyta</taxon>
        <taxon>Mediophyceae</taxon>
        <taxon>Biddulphiophycidae</taxon>
        <taxon>Eupodiscales</taxon>
        <taxon>Parodontellaceae</taxon>
        <taxon>Trieres</taxon>
    </lineage>
</organism>
<keyword id="KW-0150">Chloroplast</keyword>
<keyword id="KW-0249">Electron transport</keyword>
<keyword id="KW-0472">Membrane</keyword>
<keyword id="KW-0602">Photosynthesis</keyword>
<keyword id="KW-0934">Plastid</keyword>
<keyword id="KW-0793">Thylakoid</keyword>
<keyword id="KW-0812">Transmembrane</keyword>
<keyword id="KW-1133">Transmembrane helix</keyword>
<keyword id="KW-0813">Transport</keyword>
<reference key="1">
    <citation type="journal article" date="1995" name="Plant Mol. Biol. Rep.">
        <title>The chloroplast genome of a chlorophyll a+c-containing alga, Odontella sinensis.</title>
        <authorList>
            <person name="Kowallik K.V."/>
            <person name="Stoebe B."/>
            <person name="Schaffran I."/>
            <person name="Kroth-Pancic P."/>
            <person name="Freier U."/>
        </authorList>
    </citation>
    <scope>NUCLEOTIDE SEQUENCE [LARGE SCALE GENOMIC DNA]</scope>
</reference>
<feature type="chain" id="PRO_0000061874" description="Cytochrome b6-f complex subunit 4">
    <location>
        <begin position="1"/>
        <end position="160"/>
    </location>
</feature>
<feature type="transmembrane region" description="Helical" evidence="2">
    <location>
        <begin position="36"/>
        <end position="56"/>
    </location>
</feature>
<feature type="transmembrane region" description="Helical" evidence="2">
    <location>
        <begin position="95"/>
        <end position="115"/>
    </location>
</feature>
<feature type="transmembrane region" description="Helical" evidence="2">
    <location>
        <begin position="131"/>
        <end position="151"/>
    </location>
</feature>
<evidence type="ECO:0000250" key="1"/>
<evidence type="ECO:0000255" key="2">
    <source>
        <dbReference type="HAMAP-Rule" id="MF_01344"/>
    </source>
</evidence>
<accession>P49489</accession>
<comment type="function">
    <text evidence="2">Component of the cytochrome b6-f complex, which mediates electron transfer between photosystem II (PSII) and photosystem I (PSI), cyclic electron flow around PSI, and state transitions.</text>
</comment>
<comment type="subunit">
    <text evidence="1">The 4 large subunits of the cytochrome b6-f complex are cytochrome b6, subunit IV (17 kDa polypeptide, petD), cytochrome f and the Rieske protein, while the 4 small subunits are petG, petL, petM and petN. The complex functions as a dimer (By similarity).</text>
</comment>
<comment type="subcellular location">
    <subcellularLocation>
        <location evidence="2">Plastid</location>
        <location evidence="2">Chloroplast thylakoid membrane</location>
        <topology evidence="2">Multi-pass membrane protein</topology>
    </subcellularLocation>
</comment>
<comment type="similarity">
    <text evidence="2">Belongs to the cytochrome b family. PetD subfamily.</text>
</comment>
<geneLocation type="chloroplast"/>
<sequence>MSVIKKPDLTDPKLRAKLAKGMGHNYYGEPAWPNDLLYVFPVCILGTFACCIGLAVMAPTQMGEPADPFNTPLEILPEWYFFPTFNLLRVLPNKLLGVLAMARVPAGLITVPFIENVNKFQNPFRRPIASLVFILGFFTAVWLGIGACLPIDKAVSLGFW</sequence>